<accession>Q92I05</accession>
<dbReference type="EC" id="1.1.1.94" evidence="1"/>
<dbReference type="EMBL" id="AE006914">
    <property type="protein sequence ID" value="AAL03153.1"/>
    <property type="molecule type" value="Genomic_DNA"/>
</dbReference>
<dbReference type="PIR" id="G97776">
    <property type="entry name" value="G97776"/>
</dbReference>
<dbReference type="RefSeq" id="WP_010977245.1">
    <property type="nucleotide sequence ID" value="NC_003103.1"/>
</dbReference>
<dbReference type="SMR" id="Q92I05"/>
<dbReference type="GeneID" id="927704"/>
<dbReference type="KEGG" id="rco:RC0615"/>
<dbReference type="PATRIC" id="fig|272944.4.peg.700"/>
<dbReference type="HOGENOM" id="CLU_033449_0_0_5"/>
<dbReference type="UniPathway" id="UPA00940"/>
<dbReference type="Proteomes" id="UP000000816">
    <property type="component" value="Chromosome"/>
</dbReference>
<dbReference type="GO" id="GO:0005829">
    <property type="term" value="C:cytosol"/>
    <property type="evidence" value="ECO:0007669"/>
    <property type="project" value="TreeGrafter"/>
</dbReference>
<dbReference type="GO" id="GO:0047952">
    <property type="term" value="F:glycerol-3-phosphate dehydrogenase [NAD(P)+] activity"/>
    <property type="evidence" value="ECO:0007669"/>
    <property type="project" value="UniProtKB-UniRule"/>
</dbReference>
<dbReference type="GO" id="GO:0051287">
    <property type="term" value="F:NAD binding"/>
    <property type="evidence" value="ECO:0007669"/>
    <property type="project" value="InterPro"/>
</dbReference>
<dbReference type="GO" id="GO:0005975">
    <property type="term" value="P:carbohydrate metabolic process"/>
    <property type="evidence" value="ECO:0007669"/>
    <property type="project" value="InterPro"/>
</dbReference>
<dbReference type="GO" id="GO:0046167">
    <property type="term" value="P:glycerol-3-phosphate biosynthetic process"/>
    <property type="evidence" value="ECO:0007669"/>
    <property type="project" value="UniProtKB-UniRule"/>
</dbReference>
<dbReference type="GO" id="GO:0046168">
    <property type="term" value="P:glycerol-3-phosphate catabolic process"/>
    <property type="evidence" value="ECO:0007669"/>
    <property type="project" value="InterPro"/>
</dbReference>
<dbReference type="GO" id="GO:0006650">
    <property type="term" value="P:glycerophospholipid metabolic process"/>
    <property type="evidence" value="ECO:0007669"/>
    <property type="project" value="UniProtKB-UniRule"/>
</dbReference>
<dbReference type="GO" id="GO:0008654">
    <property type="term" value="P:phospholipid biosynthetic process"/>
    <property type="evidence" value="ECO:0007669"/>
    <property type="project" value="UniProtKB-KW"/>
</dbReference>
<dbReference type="Gene3D" id="1.10.1040.10">
    <property type="entry name" value="N-(1-d-carboxylethyl)-l-norvaline Dehydrogenase, domain 2"/>
    <property type="match status" value="1"/>
</dbReference>
<dbReference type="Gene3D" id="3.40.50.720">
    <property type="entry name" value="NAD(P)-binding Rossmann-like Domain"/>
    <property type="match status" value="1"/>
</dbReference>
<dbReference type="HAMAP" id="MF_00394">
    <property type="entry name" value="NAD_Glyc3P_dehydrog"/>
    <property type="match status" value="1"/>
</dbReference>
<dbReference type="InterPro" id="IPR008927">
    <property type="entry name" value="6-PGluconate_DH-like_C_sf"/>
</dbReference>
<dbReference type="InterPro" id="IPR013328">
    <property type="entry name" value="6PGD_dom2"/>
</dbReference>
<dbReference type="InterPro" id="IPR006168">
    <property type="entry name" value="G3P_DH_NAD-dep"/>
</dbReference>
<dbReference type="InterPro" id="IPR006109">
    <property type="entry name" value="G3P_DH_NAD-dep_C"/>
</dbReference>
<dbReference type="InterPro" id="IPR011128">
    <property type="entry name" value="G3P_DH_NAD-dep_N"/>
</dbReference>
<dbReference type="InterPro" id="IPR036291">
    <property type="entry name" value="NAD(P)-bd_dom_sf"/>
</dbReference>
<dbReference type="NCBIfam" id="NF000947">
    <property type="entry name" value="PRK00094.2-5"/>
    <property type="match status" value="1"/>
</dbReference>
<dbReference type="PANTHER" id="PTHR11728">
    <property type="entry name" value="GLYCEROL-3-PHOSPHATE DEHYDROGENASE"/>
    <property type="match status" value="1"/>
</dbReference>
<dbReference type="PANTHER" id="PTHR11728:SF1">
    <property type="entry name" value="GLYCEROL-3-PHOSPHATE DEHYDROGENASE [NAD(+)] 2, CHLOROPLASTIC"/>
    <property type="match status" value="1"/>
</dbReference>
<dbReference type="Pfam" id="PF07479">
    <property type="entry name" value="NAD_Gly3P_dh_C"/>
    <property type="match status" value="1"/>
</dbReference>
<dbReference type="Pfam" id="PF01210">
    <property type="entry name" value="NAD_Gly3P_dh_N"/>
    <property type="match status" value="1"/>
</dbReference>
<dbReference type="PIRSF" id="PIRSF000114">
    <property type="entry name" value="Glycerol-3-P_dh"/>
    <property type="match status" value="1"/>
</dbReference>
<dbReference type="PRINTS" id="PR00077">
    <property type="entry name" value="GPDHDRGNASE"/>
</dbReference>
<dbReference type="SUPFAM" id="SSF48179">
    <property type="entry name" value="6-phosphogluconate dehydrogenase C-terminal domain-like"/>
    <property type="match status" value="1"/>
</dbReference>
<dbReference type="SUPFAM" id="SSF51735">
    <property type="entry name" value="NAD(P)-binding Rossmann-fold domains"/>
    <property type="match status" value="1"/>
</dbReference>
<dbReference type="PROSITE" id="PS00957">
    <property type="entry name" value="NAD_G3PDH"/>
    <property type="match status" value="1"/>
</dbReference>
<protein>
    <recommendedName>
        <fullName evidence="1">Glycerol-3-phosphate dehydrogenase [NAD(P)+]</fullName>
        <ecNumber evidence="1">1.1.1.94</ecNumber>
    </recommendedName>
    <alternativeName>
        <fullName evidence="1">NAD(P)(+)-dependent glycerol-3-phosphate dehydrogenase</fullName>
    </alternativeName>
    <alternativeName>
        <fullName evidence="1">NAD(P)H-dependent dihydroxyacetone-phosphate reductase</fullName>
    </alternativeName>
</protein>
<gene>
    <name evidence="1" type="primary">gpsA</name>
    <name type="ordered locus">RC0615</name>
</gene>
<name>GPDA_RICCN</name>
<sequence length="325" mass="35161">MNKFKNIAVYGGGSFGTSLASLAAQNCNNVTLFLRDEAIAKEILHNKTNVKYLGDIKLPAHLQATTNLDIIKDFELIIIALPSYAFDDSIKLLKTHSISKDNTLLIATKGFARNPTALLSDRLKTLLPYNPTAFFVGPNLAKELAKNLPASASIASLDIDIANKIAYNLSSKIFTTNVSSDIVTLQVAGALKNIFAIKSGIDLARKQGENARATLIVAALKEIAILSKALGGMQKNSDILLEGVVGDLVLTCYSLGSRNTKFGYELGISSDKKKFLQEYKELAEGREALKLVLDLIKKYNLHMPIISEVASCVIPYVIPAKAGMT</sequence>
<keyword id="KW-0963">Cytoplasm</keyword>
<keyword id="KW-0444">Lipid biosynthesis</keyword>
<keyword id="KW-0443">Lipid metabolism</keyword>
<keyword id="KW-0520">NAD</keyword>
<keyword id="KW-0521">NADP</keyword>
<keyword id="KW-0547">Nucleotide-binding</keyword>
<keyword id="KW-0560">Oxidoreductase</keyword>
<keyword id="KW-0594">Phospholipid biosynthesis</keyword>
<keyword id="KW-1208">Phospholipid metabolism</keyword>
<feature type="chain" id="PRO_0000138016" description="Glycerol-3-phosphate dehydrogenase [NAD(P)+]">
    <location>
        <begin position="1"/>
        <end position="325"/>
    </location>
</feature>
<feature type="active site" description="Proton acceptor" evidence="1">
    <location>
        <position position="192"/>
    </location>
</feature>
<feature type="binding site" evidence="1">
    <location>
        <position position="14"/>
    </location>
    <ligand>
        <name>NADPH</name>
        <dbReference type="ChEBI" id="CHEBI:57783"/>
    </ligand>
</feature>
<feature type="binding site" evidence="1">
    <location>
        <position position="15"/>
    </location>
    <ligand>
        <name>NADPH</name>
        <dbReference type="ChEBI" id="CHEBI:57783"/>
    </ligand>
</feature>
<feature type="binding site" evidence="1">
    <location>
        <position position="35"/>
    </location>
    <ligand>
        <name>NADPH</name>
        <dbReference type="ChEBI" id="CHEBI:57783"/>
    </ligand>
</feature>
<feature type="binding site" evidence="1">
    <location>
        <position position="109"/>
    </location>
    <ligand>
        <name>NADPH</name>
        <dbReference type="ChEBI" id="CHEBI:57783"/>
    </ligand>
</feature>
<feature type="binding site" evidence="1">
    <location>
        <position position="109"/>
    </location>
    <ligand>
        <name>sn-glycerol 3-phosphate</name>
        <dbReference type="ChEBI" id="CHEBI:57597"/>
    </ligand>
</feature>
<feature type="binding site" evidence="1">
    <location>
        <position position="137"/>
    </location>
    <ligand>
        <name>sn-glycerol 3-phosphate</name>
        <dbReference type="ChEBI" id="CHEBI:57597"/>
    </ligand>
</feature>
<feature type="binding site" evidence="1">
    <location>
        <position position="141"/>
    </location>
    <ligand>
        <name>NADPH</name>
        <dbReference type="ChEBI" id="CHEBI:57783"/>
    </ligand>
</feature>
<feature type="binding site" evidence="1">
    <location>
        <position position="192"/>
    </location>
    <ligand>
        <name>sn-glycerol 3-phosphate</name>
        <dbReference type="ChEBI" id="CHEBI:57597"/>
    </ligand>
</feature>
<feature type="binding site" evidence="1">
    <location>
        <position position="247"/>
    </location>
    <ligand>
        <name>sn-glycerol 3-phosphate</name>
        <dbReference type="ChEBI" id="CHEBI:57597"/>
    </ligand>
</feature>
<feature type="binding site" evidence="1">
    <location>
        <position position="257"/>
    </location>
    <ligand>
        <name>sn-glycerol 3-phosphate</name>
        <dbReference type="ChEBI" id="CHEBI:57597"/>
    </ligand>
</feature>
<feature type="binding site" evidence="1">
    <location>
        <position position="258"/>
    </location>
    <ligand>
        <name>NADPH</name>
        <dbReference type="ChEBI" id="CHEBI:57783"/>
    </ligand>
</feature>
<feature type="binding site" evidence="1">
    <location>
        <position position="258"/>
    </location>
    <ligand>
        <name>sn-glycerol 3-phosphate</name>
        <dbReference type="ChEBI" id="CHEBI:57597"/>
    </ligand>
</feature>
<feature type="binding site" evidence="1">
    <location>
        <position position="259"/>
    </location>
    <ligand>
        <name>sn-glycerol 3-phosphate</name>
        <dbReference type="ChEBI" id="CHEBI:57597"/>
    </ligand>
</feature>
<feature type="binding site" evidence="1">
    <location>
        <position position="282"/>
    </location>
    <ligand>
        <name>NADPH</name>
        <dbReference type="ChEBI" id="CHEBI:57783"/>
    </ligand>
</feature>
<feature type="binding site" evidence="1">
    <location>
        <position position="284"/>
    </location>
    <ligand>
        <name>NADPH</name>
        <dbReference type="ChEBI" id="CHEBI:57783"/>
    </ligand>
</feature>
<organism>
    <name type="scientific">Rickettsia conorii (strain ATCC VR-613 / Malish 7)</name>
    <dbReference type="NCBI Taxonomy" id="272944"/>
    <lineage>
        <taxon>Bacteria</taxon>
        <taxon>Pseudomonadati</taxon>
        <taxon>Pseudomonadota</taxon>
        <taxon>Alphaproteobacteria</taxon>
        <taxon>Rickettsiales</taxon>
        <taxon>Rickettsiaceae</taxon>
        <taxon>Rickettsieae</taxon>
        <taxon>Rickettsia</taxon>
        <taxon>spotted fever group</taxon>
    </lineage>
</organism>
<proteinExistence type="inferred from homology"/>
<reference key="1">
    <citation type="journal article" date="2001" name="Science">
        <title>Mechanisms of evolution in Rickettsia conorii and R. prowazekii.</title>
        <authorList>
            <person name="Ogata H."/>
            <person name="Audic S."/>
            <person name="Renesto-Audiffren P."/>
            <person name="Fournier P.-E."/>
            <person name="Barbe V."/>
            <person name="Samson D."/>
            <person name="Roux V."/>
            <person name="Cossart P."/>
            <person name="Weissenbach J."/>
            <person name="Claverie J.-M."/>
            <person name="Raoult D."/>
        </authorList>
    </citation>
    <scope>NUCLEOTIDE SEQUENCE [LARGE SCALE GENOMIC DNA]</scope>
    <source>
        <strain>ATCC VR-613 / Malish 7</strain>
    </source>
</reference>
<comment type="function">
    <text evidence="1">Catalyzes the reduction of the glycolytic intermediate dihydroxyacetone phosphate (DHAP) to sn-glycerol 3-phosphate (G3P), the key precursor for phospholipid synthesis.</text>
</comment>
<comment type="catalytic activity">
    <reaction evidence="1">
        <text>sn-glycerol 3-phosphate + NAD(+) = dihydroxyacetone phosphate + NADH + H(+)</text>
        <dbReference type="Rhea" id="RHEA:11092"/>
        <dbReference type="ChEBI" id="CHEBI:15378"/>
        <dbReference type="ChEBI" id="CHEBI:57540"/>
        <dbReference type="ChEBI" id="CHEBI:57597"/>
        <dbReference type="ChEBI" id="CHEBI:57642"/>
        <dbReference type="ChEBI" id="CHEBI:57945"/>
        <dbReference type="EC" id="1.1.1.94"/>
    </reaction>
    <physiologicalReaction direction="right-to-left" evidence="1">
        <dbReference type="Rhea" id="RHEA:11094"/>
    </physiologicalReaction>
</comment>
<comment type="catalytic activity">
    <reaction evidence="1">
        <text>sn-glycerol 3-phosphate + NADP(+) = dihydroxyacetone phosphate + NADPH + H(+)</text>
        <dbReference type="Rhea" id="RHEA:11096"/>
        <dbReference type="ChEBI" id="CHEBI:15378"/>
        <dbReference type="ChEBI" id="CHEBI:57597"/>
        <dbReference type="ChEBI" id="CHEBI:57642"/>
        <dbReference type="ChEBI" id="CHEBI:57783"/>
        <dbReference type="ChEBI" id="CHEBI:58349"/>
        <dbReference type="EC" id="1.1.1.94"/>
    </reaction>
    <physiologicalReaction direction="right-to-left" evidence="1">
        <dbReference type="Rhea" id="RHEA:11098"/>
    </physiologicalReaction>
</comment>
<comment type="pathway">
    <text evidence="1">Membrane lipid metabolism; glycerophospholipid metabolism.</text>
</comment>
<comment type="subcellular location">
    <subcellularLocation>
        <location evidence="1">Cytoplasm</location>
    </subcellularLocation>
</comment>
<comment type="similarity">
    <text evidence="1">Belongs to the NAD-dependent glycerol-3-phosphate dehydrogenase family.</text>
</comment>
<evidence type="ECO:0000255" key="1">
    <source>
        <dbReference type="HAMAP-Rule" id="MF_00394"/>
    </source>
</evidence>